<evidence type="ECO:0000250" key="1"/>
<evidence type="ECO:0000256" key="2">
    <source>
        <dbReference type="SAM" id="MobiDB-lite"/>
    </source>
</evidence>
<protein>
    <recommendedName>
        <fullName>Protein Vpr</fullName>
    </recommendedName>
    <alternativeName>
        <fullName>R ORF protein</fullName>
    </alternativeName>
    <alternativeName>
        <fullName>Viral protein R</fullName>
    </alternativeName>
</protein>
<reference key="1">
    <citation type="journal article" date="1988" name="Proc. Natl. Acad. Sci. U.S.A.">
        <title>Genetic variability between isolates of human immunodeficiency virus (HIV) type 2 is comparable to the variability among HIV type 1.</title>
        <authorList>
            <person name="Zagury J.F."/>
            <person name="Franchini G."/>
            <person name="Reitz M.S. Jr."/>
            <person name="Collalti E."/>
            <person name="Starcich B.R."/>
            <person name="Hall L."/>
            <person name="Fargnoli K.A."/>
            <person name="Jagodzinski L.L."/>
            <person name="Guo H.-G."/>
            <person name="Laure F."/>
            <person name="Arya S.K."/>
            <person name="Josephs S.F."/>
            <person name="Zagury D."/>
            <person name="Wong-Staal F."/>
            <person name="Gallo R.C."/>
        </authorList>
    </citation>
    <scope>NUCLEOTIDE SEQUENCE [GENOMIC DNA]</scope>
</reference>
<organismHost>
    <name type="scientific">Homo sapiens</name>
    <name type="common">Human</name>
    <dbReference type="NCBI Taxonomy" id="9606"/>
</organismHost>
<accession>P05930</accession>
<organism>
    <name type="scientific">Human immunodeficiency virus type 2 subtype A (isolate NIH-Z)</name>
    <name type="common">HIV-2</name>
    <dbReference type="NCBI Taxonomy" id="11719"/>
    <lineage>
        <taxon>Viruses</taxon>
        <taxon>Riboviria</taxon>
        <taxon>Pararnavirae</taxon>
        <taxon>Artverviricota</taxon>
        <taxon>Revtraviricetes</taxon>
        <taxon>Ortervirales</taxon>
        <taxon>Retroviridae</taxon>
        <taxon>Orthoretrovirinae</taxon>
        <taxon>Lentivirus</taxon>
        <taxon>Human immunodeficiency virus 2</taxon>
    </lineage>
</organism>
<gene>
    <name type="primary">vpr</name>
</gene>
<keyword id="KW-0010">Activator</keyword>
<keyword id="KW-0014">AIDS</keyword>
<keyword id="KW-0131">Cell cycle</keyword>
<keyword id="KW-1079">Host G2/M cell cycle arrest by virus</keyword>
<keyword id="KW-1048">Host nucleus</keyword>
<keyword id="KW-0945">Host-virus interaction</keyword>
<keyword id="KW-1121">Modulation of host cell cycle by virus</keyword>
<keyword id="KW-0597">Phosphoprotein</keyword>
<keyword id="KW-0804">Transcription</keyword>
<keyword id="KW-0805">Transcription regulation</keyword>
<keyword id="KW-1163">Viral penetration into host nucleus</keyword>
<keyword id="KW-0946">Virion</keyword>
<keyword id="KW-1160">Virus entry into host cell</keyword>
<proteinExistence type="inferred from homology"/>
<name>VPR_HV2NZ</name>
<dbReference type="EMBL" id="J03654">
    <property type="protein sequence ID" value="AAB00758.1"/>
    <property type="molecule type" value="Genomic_DNA"/>
</dbReference>
<dbReference type="SMR" id="P05930"/>
<dbReference type="Proteomes" id="UP000246679">
    <property type="component" value="Segment"/>
</dbReference>
<dbReference type="GO" id="GO:0043657">
    <property type="term" value="C:host cell"/>
    <property type="evidence" value="ECO:0007669"/>
    <property type="project" value="GOC"/>
</dbReference>
<dbReference type="GO" id="GO:0042025">
    <property type="term" value="C:host cell nucleus"/>
    <property type="evidence" value="ECO:0007669"/>
    <property type="project" value="UniProtKB-SubCell"/>
</dbReference>
<dbReference type="GO" id="GO:0044423">
    <property type="term" value="C:virion component"/>
    <property type="evidence" value="ECO:0007669"/>
    <property type="project" value="UniProtKB-KW"/>
</dbReference>
<dbReference type="GO" id="GO:0046718">
    <property type="term" value="P:symbiont entry into host cell"/>
    <property type="evidence" value="ECO:0007669"/>
    <property type="project" value="UniProtKB-KW"/>
</dbReference>
<dbReference type="GO" id="GO:0039592">
    <property type="term" value="P:symbiont-mediated arrest of host cell cycle during G2/M transition"/>
    <property type="evidence" value="ECO:0007669"/>
    <property type="project" value="UniProtKB-KW"/>
</dbReference>
<dbReference type="GO" id="GO:0075732">
    <property type="term" value="P:viral penetration into host nucleus"/>
    <property type="evidence" value="ECO:0007669"/>
    <property type="project" value="UniProtKB-KW"/>
</dbReference>
<dbReference type="Gene3D" id="6.10.210.10">
    <property type="match status" value="1"/>
</dbReference>
<dbReference type="Gene3D" id="1.20.5.90">
    <property type="entry name" value="VpR/VpX protein, C-terminal domain"/>
    <property type="match status" value="1"/>
</dbReference>
<dbReference type="InterPro" id="IPR000012">
    <property type="entry name" value="RetroV_VpR/X"/>
</dbReference>
<dbReference type="Pfam" id="PF00522">
    <property type="entry name" value="VPR"/>
    <property type="match status" value="1"/>
</dbReference>
<dbReference type="PRINTS" id="PR00444">
    <property type="entry name" value="HIVVPRVPX"/>
</dbReference>
<comment type="function">
    <text evidence="1">Stimulates gene expression driven by the HIV-2 LTR. Prevents infected cells from undergoing mitosis and proliferating, by inducing arrest or delay in the G2 phase of the cell cycle. Cell cycle arrest creates a favorable environment for maximizing viral expression and production (By similarity).</text>
</comment>
<comment type="subunit">
    <text evidence="1">Interacts with human UNG.</text>
</comment>
<comment type="subcellular location">
    <subcellularLocation>
        <location>Virion</location>
    </subcellularLocation>
    <subcellularLocation>
        <location evidence="1">Host nucleus</location>
    </subcellularLocation>
</comment>
<sequence>MTEAPTELPPEDRTPPREPGDAWVIEILREIEEEALRHFDPRLLTALGRYIYTRHGDTLEGARELIRILQRALFAHFRAGCGHSRIGQTRGGNPLSAIPTPRGMH</sequence>
<feature type="chain" id="PRO_0000085462" description="Protein Vpr">
    <location>
        <begin position="1"/>
        <end position="105"/>
    </location>
</feature>
<feature type="region of interest" description="Disordered" evidence="2">
    <location>
        <begin position="1"/>
        <end position="20"/>
    </location>
</feature>
<feature type="region of interest" description="Disordered" evidence="2">
    <location>
        <begin position="85"/>
        <end position="105"/>
    </location>
</feature>
<feature type="compositionally biased region" description="Basic and acidic residues" evidence="2">
    <location>
        <begin position="10"/>
        <end position="20"/>
    </location>
</feature>
<feature type="modified residue" description="Phosphoserine; by host" evidence="1">
    <location>
        <position position="84"/>
    </location>
</feature>